<keyword id="KW-0106">Calcium</keyword>
<keyword id="KW-0963">Cytoplasm</keyword>
<keyword id="KW-0281">Fimbrium</keyword>
<keyword id="KW-1029">Fimbrium biogenesis</keyword>
<keyword id="KW-0472">Membrane</keyword>
<keyword id="KW-0479">Metal-binding</keyword>
<keyword id="KW-0582">Pharmaceutical</keyword>
<keyword id="KW-0732">Signal</keyword>
<sequence length="1158" mass="126693">MIHQITRAGKSLLAAGCTLSILFASDSYAATALNVSQQPLFLTQGVAPNLLFTLDDSGSMAWAYVPDGISGNSGRAGRSSDYNALYYNPDYAYQVPKKLTLSGDQIIVSDYPVPRFTAAWQDGYAQGSTTNLSNNYRPQWGTGWLGCIDSSCNTGRAYYYTYKVSASCPAQPVSSSNSCYTYNALPTSQESNFAIWYSYYRNRILATKTAANLAFYSLPENVRLTWGALNTCSIGANSRSCQNNALLQFNKQHKINFFNWLANSPASGGTPLHAALDRAGRFLQTNGTAYTTEDGKTYSCRASYHIMMTDGIWNGRNVTPGNLDNQNQTFPDSTLYRPQPPYADSNASSLADLAFKYWTTDLRPSIDNDLKPFMAYKSGDDSKDYWDPRNNPATWQHMVNFTVGLGLSYSLTLNSAPTWTGSTFGNYEELMAGSKAWPSVDNDAAPGNVYDLWHAAINSRGDFFSAESPDSLVQAFNKILTRISERNTSSSKPAMTSALQDDGTGDKLIRYSYQSSFASDKNWAGDLIRYKVESTSTGSTKTQEWSAGALLDNRAPATRNIYIASNSGTNRLKPFTWSNIEGSQLATWLNRNPDKDNQADTKGAQRVDFIRGQQNMDGFRQRQAVLGDIVHSSPAVVGPAQYLTYLANPIEPSGDYGTFKTEADQRSPRVYVGSNDGMLHGFNIKTGVEEFAFIPTAVFEKLNKLTGISYQGGAHQYFVDATPVVSDAFFDGAWHTVLIGTLGAGGRGLFALDVTKPDDVKLLWEYDSSTDSDLGYTFSKPTVARLHSGQWAVVTGNGYGSDNDKAALLLIDLKKGTLIKKLEVQSERGIANGLSTPRLADNNSDGIADYAYAGDLQGNIWRFDLIGNTRNDDPDTNTSINPFKPGDVDPSAFRVSFSGAPLFRARADNNTRQPITAPPTLVRHPSRKGYIVIVGTGKYFEDDDAQADTSRAMTLYGIWDRQTKGESANSTPTIDRNALTAQTMTTEANSTFGSVNRNIRLISQNPVKWYKDGATGTANSDVASYGWRLNLEVNSSKKGEMMIEDMFAAGQVLLLQTLTPNDDPCDSGSTSWTYGLNPYTGGRTSFTVFDLKRAGIVDSGSDYNGSVVSAFQQDGLGGLAITQNEQRQSEACTGDECIIFNPSDKSNGRQTWRVVEEK</sequence>
<accession>Q02GC2</accession>
<accession>Q7WZN9</accession>
<accession>S0J269</accession>
<evidence type="ECO:0000250" key="1">
    <source>
        <dbReference type="UniProtKB" id="Q9HVM8"/>
    </source>
</evidence>
<evidence type="ECO:0000250" key="2">
    <source>
        <dbReference type="UniProtKB" id="S0HPF7"/>
    </source>
</evidence>
<evidence type="ECO:0000255" key="3"/>
<evidence type="ECO:0000269" key="4">
    <source>
    </source>
</evidence>
<evidence type="ECO:0000269" key="5">
    <source>
    </source>
</evidence>
<evidence type="ECO:0000269" key="6">
    <source>
    </source>
</evidence>
<evidence type="ECO:0000269" key="7">
    <source>
    </source>
</evidence>
<evidence type="ECO:0000303" key="8">
    <source>
    </source>
</evidence>
<evidence type="ECO:0000303" key="9">
    <source>
    </source>
</evidence>
<evidence type="ECO:0000303" key="10">
    <source>
    </source>
</evidence>
<evidence type="ECO:0000303" key="11">
    <source>
    </source>
</evidence>
<evidence type="ECO:0000305" key="12"/>
<evidence type="ECO:0000305" key="13">
    <source>
    </source>
</evidence>
<evidence type="ECO:0000312" key="14">
    <source>
        <dbReference type="EMBL" id="AAP81276.1"/>
    </source>
</evidence>
<evidence type="ECO:0000312" key="15">
    <source>
        <dbReference type="EMBL" id="ABJ13934.1"/>
    </source>
</evidence>
<evidence type="ECO:0000312" key="16">
    <source>
        <dbReference type="EMBL" id="EOT21828.1"/>
    </source>
</evidence>
<evidence type="ECO:0000312" key="17">
    <source>
        <dbReference type="Proteomes" id="UP000000653"/>
    </source>
</evidence>
<comment type="function">
    <text evidence="1 2 7">Involved in pilus assembly, twitching motility and adhesion to host cells. Primes type IV pili (T4P) assembly and is required for inclusion of minor pilins PilV, PilW and PilX to the surface pili. Stabilizes assembled pilus fibers likely by antagonizing retraction mediated by PilT. Calcium-binding and calcium release by PilY1 seem to be essential for twitching motility and for regulation of pilus retraction dynamics of PilT (By similarity). Regulates surface-activated virulence possibly by acting as a surface-attachment mechanosensor (PubMed:25385640).</text>
</comment>
<comment type="subcellular location">
    <subcellularLocation>
        <location evidence="2">Fimbrium</location>
    </subcellularLocation>
    <subcellularLocation>
        <location evidence="5">Membrane</location>
    </subcellularLocation>
    <subcellularLocation>
        <location evidence="5">Cytoplasm</location>
        <location evidence="5">Cytosol</location>
    </subcellularLocation>
    <text evidence="1 2">Colocalizes with the T4P fraction when surface pili are present. Sheared surface fraction when PilV, PilW and PilX are also present.</text>
</comment>
<comment type="induction">
    <text evidence="6 7">By the swarm surface growth conditions relative to liquid growth conditions (PubMed:22865844). By surface attachment (PubMed:25385640).</text>
</comment>
<comment type="domain">
    <text evidence="13">Contains a region (residues 173-365) weakly homologous to eukaryotic mechanically sensitive Von Willebrand Factor a (VWFa).</text>
</comment>
<comment type="disruption phenotype">
    <text evidence="4 5 6 7">Loss of twitching motility, predesposes to autolysis and impairs the secretion of quinolones and pyocyanine, but on the other hand promotes growth in stationary phase and bacterial survival in murine airway infection models (PubMed:19054330). Has reduced congo red (CR) binding which is a measure of Pel exopolysaccharide (EPS) production, and shows both increased swarming motility and an altered swarming pattern compared to wild-type. Suppresses cyclic-di-GMP (c-di-GMP) degrading phosphodiesterase bifA deletion mutant's swarming defects and eliminates its hyperbiofilm formation although the global pools of c-di-GMP remain unchanged (PubMed:20233936). PilY1 single mutant does not exhibit any changes in rhamnolipid production or in levels of the flagellar subunit FliC (PubMed:22865844). Defective for surface-activated virulence toward amoebae (PubMed:25385640).</text>
</comment>
<comment type="pharmaceutical">
    <text evidence="13">Targeting PilY1-mediated mechanosensation as a global virulence regulator could be an attractive therapeutic strategy in the development of treatments for infections caused by P.aeruginosa.</text>
</comment>
<comment type="miscellaneous">
    <text evidence="5 6">Overexpression of PilY1 represses swarming motility in a pilus-independent manner and the repression specifically requires the diguanylate cyclase (DGC) SadC but not other DGCs (PubMed:20233936). Increased c-di-GMP levels upon PilY1 overexpression in surface-grown cells, but only in the presence of SadC (PubMed:22865844).</text>
</comment>
<comment type="similarity">
    <text evidence="12">Belongs to the PilY1 family.</text>
</comment>
<comment type="sequence caution" evidence="12">
    <conflict type="erroneous initiation">
        <sequence resource="EMBL-CDS" id="AAP81276"/>
    </conflict>
    <text>Extended N-terminus.</text>
</comment>
<name>PILY1_PSEAB</name>
<feature type="signal peptide" evidence="3">
    <location>
        <begin position="1"/>
        <end position="29"/>
    </location>
</feature>
<feature type="chain" id="PRO_0000431915" description="Type IV pilus biogenesis factor PilY1" evidence="3">
    <location>
        <begin position="30"/>
        <end position="1158"/>
    </location>
</feature>
<feature type="binding site" evidence="2">
    <location>
        <position position="841"/>
    </location>
    <ligand>
        <name>Ca(2+)</name>
        <dbReference type="ChEBI" id="CHEBI:29108"/>
    </ligand>
</feature>
<feature type="binding site" evidence="2">
    <location>
        <position position="843"/>
    </location>
    <ligand>
        <name>Ca(2+)</name>
        <dbReference type="ChEBI" id="CHEBI:29108"/>
    </ligand>
</feature>
<feature type="binding site" evidence="2">
    <location>
        <position position="845"/>
    </location>
    <ligand>
        <name>Ca(2+)</name>
        <dbReference type="ChEBI" id="CHEBI:29108"/>
    </ligand>
</feature>
<feature type="binding site" evidence="2">
    <location>
        <position position="847"/>
    </location>
    <ligand>
        <name>Ca(2+)</name>
        <dbReference type="ChEBI" id="CHEBI:29108"/>
    </ligand>
</feature>
<feature type="binding site" evidence="2">
    <location>
        <position position="849"/>
    </location>
    <ligand>
        <name>Ca(2+)</name>
        <dbReference type="ChEBI" id="CHEBI:29108"/>
    </ligand>
</feature>
<feature type="mutagenesis site" description="Inhibits swarming as wild-type." evidence="5">
    <original>T</original>
    <variation>A</variation>
    <location>
        <position position="270"/>
    </location>
</feature>
<feature type="mutagenesis site" description="Only partial swarming inhibition compared to the complete inhibition of the wild-type and mislocalization." evidence="5">
    <original>DG</original>
    <variation>AA</variation>
    <location>
        <begin position="310"/>
        <end position="311"/>
    </location>
</feature>
<proteinExistence type="evidence at protein level"/>
<reference evidence="14" key="1">
    <citation type="journal article" date="2004" name="Proc. Natl. Acad. Sci. U.S.A.">
        <title>The broad host range pathogen Pseudomonas aeruginosa strain PA14 carries two pathogenicity islands harboring plant and animal virulence genes.</title>
        <authorList>
            <person name="He J."/>
            <person name="Baldini R.L."/>
            <person name="Deziel E."/>
            <person name="Saucier M."/>
            <person name="Zhang Q."/>
            <person name="Liberati N.T."/>
            <person name="Lee D."/>
            <person name="Urbach J."/>
            <person name="Goodman H.M."/>
            <person name="Rahme L.G."/>
        </authorList>
    </citation>
    <scope>NUCLEOTIDE SEQUENCE [GENOMIC DNA]</scope>
    <source>
        <strain evidence="14">UCBPP-PA14</strain>
    </source>
</reference>
<reference evidence="15 17" key="2">
    <citation type="journal article" date="2006" name="Genome Biol.">
        <title>Genomic analysis reveals that Pseudomonas aeruginosa virulence is combinatorial.</title>
        <authorList>
            <person name="Lee D.G."/>
            <person name="Urbach J.M."/>
            <person name="Wu G."/>
            <person name="Liberati N.T."/>
            <person name="Feinbaum R.L."/>
            <person name="Miyata S."/>
            <person name="Diggins L.T."/>
            <person name="He J."/>
            <person name="Saucier M."/>
            <person name="Deziel E."/>
            <person name="Friedman L."/>
            <person name="Li L."/>
            <person name="Grills G."/>
            <person name="Montgomery K."/>
            <person name="Kucherlapati R."/>
            <person name="Rahme L.G."/>
            <person name="Ausubel F.M."/>
        </authorList>
    </citation>
    <scope>NUCLEOTIDE SEQUENCE [LARGE SCALE GENOMIC DNA]</scope>
    <source>
        <strain evidence="15 17">UCBPP-PA14</strain>
    </source>
</reference>
<reference evidence="16" key="3">
    <citation type="submission" date="2013-05" db="EMBL/GenBank/DDBJ databases">
        <title>The genome sequence of Pseudomonas aeruginosa PA14.</title>
        <authorList>
            <consortium name="The Broad Institute Genomics Platform"/>
            <consortium name="The Broad Institute Genome Sequencing Center for Infectious Disease"/>
            <person name="Hung D."/>
            <person name="Lory S."/>
            <person name="Poulsen B."/>
            <person name="Penaranda C."/>
            <person name="Ausubel F."/>
            <person name="Walker B."/>
            <person name="Young S."/>
            <person name="Zeng Q."/>
            <person name="Gargeya S."/>
            <person name="Fitzgerald M."/>
            <person name="Haas B."/>
            <person name="Abouelleil A."/>
            <person name="Allen A.W."/>
            <person name="Alvarado L."/>
            <person name="Arachchi H.M."/>
            <person name="Berlin A.M."/>
            <person name="Chapman S.B."/>
            <person name="Gainer-Dewar J."/>
            <person name="Goldberg J."/>
            <person name="Griggs A."/>
            <person name="Gujja S."/>
            <person name="Hansen M."/>
            <person name="Howarth C."/>
            <person name="Imamovic A."/>
            <person name="Ireland A."/>
            <person name="Larimer J."/>
            <person name="McCowan C."/>
            <person name="Murphy C."/>
            <person name="Pearson M."/>
            <person name="Poon T.W."/>
            <person name="Priest M."/>
            <person name="Roberts A."/>
            <person name="Saif S."/>
            <person name="Shea T."/>
            <person name="Sisk P."/>
            <person name="Sykes S."/>
            <person name="Wortman J."/>
            <person name="Nusbaum C."/>
            <person name="Birren B."/>
        </authorList>
    </citation>
    <scope>NUCLEOTIDE SEQUENCE [LARGE SCALE GENOMIC DNA]</scope>
    <source>
        <strain evidence="16">UCBPP-PA14</strain>
    </source>
</reference>
<reference key="4">
    <citation type="journal article" date="2009" name="Mol. Microbiol.">
        <title>Multiple roles of Pseudomonas aeruginosa TBCF10839 PilY1 in motility, transport and infection.</title>
        <authorList>
            <person name="Bohn Y.S."/>
            <person name="Brandes G."/>
            <person name="Rakhimova E."/>
            <person name="Horatzek S."/>
            <person name="Salunkhe P."/>
            <person name="Munder A."/>
            <person name="van Barneveld A."/>
            <person name="Jordan D."/>
            <person name="Bredenbruch F."/>
            <person name="Haeussler S."/>
            <person name="Riedel K."/>
            <person name="Eberl L."/>
            <person name="Jensen P."/>
            <person name="Bjarnsholt T."/>
            <person name="Moser C."/>
            <person name="Hoiby N."/>
            <person name="Tuemmler B."/>
            <person name="Wiehlmann L."/>
        </authorList>
    </citation>
    <scope>DISRUPTION PHENOTYPE</scope>
    <source>
        <strain evidence="8">UCBPP-PA14</strain>
    </source>
</reference>
<reference key="5">
    <citation type="journal article" date="2010" name="J. Bacteriol.">
        <title>Cyclic-di-GMP-mediated repression of swarming motility by Pseudomonas aeruginosa: the pilY1 gene and its impact on surface-associated behaviors.</title>
        <authorList>
            <person name="Kuchma S.L."/>
            <person name="Ballok A.E."/>
            <person name="Merritt J.H."/>
            <person name="Hammond J.H."/>
            <person name="Lu W."/>
            <person name="Rabinowitz J.D."/>
            <person name="O'Toole G.A."/>
        </authorList>
    </citation>
    <scope>SUBCELLULAR LOCATION</scope>
    <scope>DISRUPTION PHENOTYPE</scope>
    <scope>MISCELLANEOUS</scope>
    <scope>MUTAGENESIS OF THR-270 AND 310-ASP-GLY-311</scope>
    <source>
        <strain evidence="9">UCBPP-PA14</strain>
    </source>
</reference>
<reference key="6">
    <citation type="journal article" date="2012" name="J. Bacteriol.">
        <title>Minor pilins of the type IV pilus system participate in the negative regulation of swarming motility.</title>
        <authorList>
            <person name="Kuchma S.L."/>
            <person name="Griffin E.F."/>
            <person name="O'Toole G.A."/>
        </authorList>
    </citation>
    <scope>INDUCTION</scope>
    <scope>DISRUPTION PHENOTYPE</scope>
    <scope>MISCELLANEOUS</scope>
    <source>
        <strain evidence="10">UCBPP-PA14</strain>
    </source>
</reference>
<reference key="7">
    <citation type="journal article" date="2014" name="Proc. Natl. Acad. Sci. U.S.A.">
        <title>Surface attachment induces Pseudomonas aeruginosa virulence.</title>
        <authorList>
            <person name="Siryaporn A."/>
            <person name="Kuchma S.L."/>
            <person name="O'Toole G.A."/>
            <person name="Gitai Z."/>
        </authorList>
    </citation>
    <scope>FUNCTION</scope>
    <scope>INDUCTION BY SURFACE ATTACHMENT</scope>
    <scope>DISRUPTION PHENOTYPE</scope>
    <scope>PHARMACEUTICAL</scope>
    <scope>VWFA HOMOLOGY REGION</scope>
    <source>
        <strain evidence="11">UCBPP-PA14</strain>
    </source>
</reference>
<protein>
    <recommendedName>
        <fullName evidence="2">Type IV pilus biogenesis factor PilY1</fullName>
    </recommendedName>
    <alternativeName>
        <fullName evidence="1">Pilus-associated adhesin PilY1</fullName>
    </alternativeName>
</protein>
<organism evidence="15">
    <name type="scientific">Pseudomonas aeruginosa (strain UCBPP-PA14)</name>
    <dbReference type="NCBI Taxonomy" id="208963"/>
    <lineage>
        <taxon>Bacteria</taxon>
        <taxon>Pseudomonadati</taxon>
        <taxon>Pseudomonadota</taxon>
        <taxon>Gammaproteobacteria</taxon>
        <taxon>Pseudomonadales</taxon>
        <taxon>Pseudomonadaceae</taxon>
        <taxon>Pseudomonas</taxon>
    </lineage>
</organism>
<dbReference type="EMBL" id="AY273871">
    <property type="protein sequence ID" value="AAP81276.1"/>
    <property type="status" value="ALT_INIT"/>
    <property type="molecule type" value="Genomic_DNA"/>
</dbReference>
<dbReference type="EMBL" id="CP000438">
    <property type="protein sequence ID" value="ABJ13934.1"/>
    <property type="molecule type" value="Genomic_DNA"/>
</dbReference>
<dbReference type="EMBL" id="ASWV01000003">
    <property type="protein sequence ID" value="EOT21828.1"/>
    <property type="molecule type" value="Genomic_DNA"/>
</dbReference>
<dbReference type="RefSeq" id="WP_003141555.1">
    <property type="nucleotide sequence ID" value="NZ_CP034244.1"/>
</dbReference>
<dbReference type="SMR" id="Q02GC2"/>
<dbReference type="KEGG" id="pau:PA14_60310"/>
<dbReference type="PATRIC" id="fig|652611.13.peg.149"/>
<dbReference type="PseudoCAP" id="PA14_60310"/>
<dbReference type="HOGENOM" id="CLU_001890_1_1_6"/>
<dbReference type="BioCyc" id="PAER208963:G1G74-5098-MONOMER"/>
<dbReference type="Proteomes" id="UP000000653">
    <property type="component" value="Chromosome"/>
</dbReference>
<dbReference type="GO" id="GO:0005829">
    <property type="term" value="C:cytosol"/>
    <property type="evidence" value="ECO:0007669"/>
    <property type="project" value="UniProtKB-SubCell"/>
</dbReference>
<dbReference type="GO" id="GO:0016020">
    <property type="term" value="C:membrane"/>
    <property type="evidence" value="ECO:0007669"/>
    <property type="project" value="UniProtKB-SubCell"/>
</dbReference>
<dbReference type="GO" id="GO:0009289">
    <property type="term" value="C:pilus"/>
    <property type="evidence" value="ECO:0007669"/>
    <property type="project" value="UniProtKB-SubCell"/>
</dbReference>
<dbReference type="GO" id="GO:0005509">
    <property type="term" value="F:calcium ion binding"/>
    <property type="evidence" value="ECO:0000250"/>
    <property type="project" value="UniProtKB"/>
</dbReference>
<dbReference type="Gene3D" id="3.40.50.410">
    <property type="entry name" value="von Willebrand factor, type A domain"/>
    <property type="match status" value="1"/>
</dbReference>
<dbReference type="InterPro" id="IPR008707">
    <property type="entry name" value="PilY1_beta_prop_dom"/>
</dbReference>
<dbReference type="InterPro" id="IPR011047">
    <property type="entry name" value="Quinoprotein_ADH-like_sf"/>
</dbReference>
<dbReference type="InterPro" id="IPR036465">
    <property type="entry name" value="vWFA_dom_sf"/>
</dbReference>
<dbReference type="Pfam" id="PF05567">
    <property type="entry name" value="T4P_PilY1"/>
    <property type="match status" value="1"/>
</dbReference>
<dbReference type="SUPFAM" id="SSF50998">
    <property type="entry name" value="Quinoprotein alcohol dehydrogenase-like"/>
    <property type="match status" value="1"/>
</dbReference>
<gene>
    <name evidence="15" type="primary">pilY1</name>
    <name evidence="15" type="ordered locus">PA14_60310</name>
</gene>